<sequence>MERLQGLLLWLLLSPSVVWASRGPLRPLCRPVNATLAAENEACPVCITFSTSICAGYCPSMVRVLPAALPPVPQPVCTYHELHFASVRLPGCPPGVDPMVSFPVALSCRCGPCRLSTSDCGGPRTQPM</sequence>
<feature type="signal peptide" evidence="1">
    <location>
        <begin position="1"/>
        <end position="20"/>
    </location>
</feature>
<feature type="chain" id="PRO_0000011731" description="Lutropin subunit beta">
    <location>
        <begin position="21"/>
        <end position="128" status="greater than"/>
    </location>
</feature>
<feature type="glycosylation site" description="N-linked (GlcNAc...) asparagine" evidence="2">
    <location>
        <position position="33"/>
    </location>
</feature>
<feature type="disulfide bond" evidence="1">
    <location>
        <begin position="29"/>
        <end position="77"/>
    </location>
</feature>
<feature type="disulfide bond" evidence="1">
    <location>
        <begin position="43"/>
        <end position="92"/>
    </location>
</feature>
<feature type="disulfide bond" evidence="1">
    <location>
        <begin position="54"/>
        <end position="108"/>
    </location>
</feature>
<feature type="disulfide bond" evidence="1">
    <location>
        <begin position="58"/>
        <end position="110"/>
    </location>
</feature>
<feature type="disulfide bond" evidence="1">
    <location>
        <begin position="113"/>
        <end position="120"/>
    </location>
</feature>
<feature type="non-terminal residue">
    <location>
        <position position="128"/>
    </location>
</feature>
<keyword id="KW-1015">Disulfide bond</keyword>
<keyword id="KW-0325">Glycoprotein</keyword>
<keyword id="KW-0372">Hormone</keyword>
<keyword id="KW-0964">Secreted</keyword>
<keyword id="KW-0732">Signal</keyword>
<protein>
    <recommendedName>
        <fullName>Lutropin subunit beta</fullName>
        <shortName>Lutropin beta chain</shortName>
    </recommendedName>
    <alternativeName>
        <fullName>Luteinizing hormone subunit beta</fullName>
        <shortName>LH-B</shortName>
        <shortName>LSH-B</shortName>
        <shortName>LSH-beta</shortName>
    </alternativeName>
</protein>
<evidence type="ECO:0000250" key="1"/>
<evidence type="ECO:0000255" key="2"/>
<evidence type="ECO:0000305" key="3"/>
<proteinExistence type="evidence at transcript level"/>
<comment type="function">
    <text>Promotes spermatogenesis and ovulation by stimulating the testes and ovaries to synthesize steroids.</text>
</comment>
<comment type="subunit">
    <text>Heterodimer of a common alpha chain and a unique beta chain which confers biological specificity to thyrotropin, lutropin, follitropin and gonadotropin.</text>
</comment>
<comment type="subcellular location">
    <subcellularLocation>
        <location>Secreted</location>
    </subcellularLocation>
</comment>
<comment type="similarity">
    <text evidence="3">Belongs to the glycoprotein hormones subunit beta family.</text>
</comment>
<accession>Q9QYA9</accession>
<organism>
    <name type="scientific">Phodopus sungorus</name>
    <name type="common">Striped hairy-footed hamster</name>
    <name type="synonym">Djungarian hamster</name>
    <dbReference type="NCBI Taxonomy" id="10044"/>
    <lineage>
        <taxon>Eukaryota</taxon>
        <taxon>Metazoa</taxon>
        <taxon>Chordata</taxon>
        <taxon>Craniata</taxon>
        <taxon>Vertebrata</taxon>
        <taxon>Euteleostomi</taxon>
        <taxon>Mammalia</taxon>
        <taxon>Eutheria</taxon>
        <taxon>Euarchontoglires</taxon>
        <taxon>Glires</taxon>
        <taxon>Rodentia</taxon>
        <taxon>Myomorpha</taxon>
        <taxon>Muroidea</taxon>
        <taxon>Cricetidae</taxon>
        <taxon>Cricetinae</taxon>
        <taxon>Phodopus</taxon>
    </lineage>
</organism>
<dbReference type="EMBL" id="AF106915">
    <property type="protein sequence ID" value="AAF15966.1"/>
    <property type="molecule type" value="mRNA"/>
</dbReference>
<dbReference type="SMR" id="Q9QYA9"/>
<dbReference type="GlyCosmos" id="Q9QYA9">
    <property type="glycosylation" value="1 site, No reported glycans"/>
</dbReference>
<dbReference type="GO" id="GO:0005737">
    <property type="term" value="C:cytoplasm"/>
    <property type="evidence" value="ECO:0007669"/>
    <property type="project" value="TreeGrafter"/>
</dbReference>
<dbReference type="GO" id="GO:0005615">
    <property type="term" value="C:extracellular space"/>
    <property type="evidence" value="ECO:0007669"/>
    <property type="project" value="TreeGrafter"/>
</dbReference>
<dbReference type="GO" id="GO:0005179">
    <property type="term" value="F:hormone activity"/>
    <property type="evidence" value="ECO:0007669"/>
    <property type="project" value="UniProtKB-KW"/>
</dbReference>
<dbReference type="GO" id="GO:0007186">
    <property type="term" value="P:G protein-coupled receptor signaling pathway"/>
    <property type="evidence" value="ECO:0007669"/>
    <property type="project" value="TreeGrafter"/>
</dbReference>
<dbReference type="CDD" id="cd00069">
    <property type="entry name" value="GHB_like"/>
    <property type="match status" value="1"/>
</dbReference>
<dbReference type="FunFam" id="2.10.90.10:FF:000007">
    <property type="entry name" value="Luteinizing hormone beta subunit"/>
    <property type="match status" value="1"/>
</dbReference>
<dbReference type="Gene3D" id="2.10.90.10">
    <property type="entry name" value="Cystine-knot cytokines"/>
    <property type="match status" value="1"/>
</dbReference>
<dbReference type="InterPro" id="IPR029034">
    <property type="entry name" value="Cystine-knot_cytokine"/>
</dbReference>
<dbReference type="InterPro" id="IPR006208">
    <property type="entry name" value="Glyco_hormone_CN"/>
</dbReference>
<dbReference type="InterPro" id="IPR001545">
    <property type="entry name" value="Gonadotropin_bsu"/>
</dbReference>
<dbReference type="InterPro" id="IPR018245">
    <property type="entry name" value="Gonadotropin_bsu_CS"/>
</dbReference>
<dbReference type="PANTHER" id="PTHR11515">
    <property type="entry name" value="GLYCOPROTEIN HORMONE BETA CHAIN"/>
    <property type="match status" value="1"/>
</dbReference>
<dbReference type="PANTHER" id="PTHR11515:SF11">
    <property type="entry name" value="LUTROPIN SUBUNIT BETA"/>
    <property type="match status" value="1"/>
</dbReference>
<dbReference type="Pfam" id="PF00007">
    <property type="entry name" value="Cys_knot"/>
    <property type="match status" value="1"/>
</dbReference>
<dbReference type="SMART" id="SM00068">
    <property type="entry name" value="GHB"/>
    <property type="match status" value="1"/>
</dbReference>
<dbReference type="SUPFAM" id="SSF57501">
    <property type="entry name" value="Cystine-knot cytokines"/>
    <property type="match status" value="1"/>
</dbReference>
<dbReference type="PROSITE" id="PS00261">
    <property type="entry name" value="GLYCO_HORMONE_BETA_1"/>
    <property type="match status" value="1"/>
</dbReference>
<reference key="1">
    <citation type="journal article" date="2000" name="Biol. Reprod.">
        <title>Differential regulation of pituitary gonadotropin subunit messenger ribonucleic acid levels in photostimulated Siberian hamsters.</title>
        <authorList>
            <person name="Bernard D.J."/>
            <person name="Merzlyak I.Y."/>
            <person name="Horton T.H."/>
            <person name="Turek F.W."/>
        </authorList>
    </citation>
    <scope>NUCLEOTIDE SEQUENCE [MRNA]</scope>
</reference>
<name>LSHB_PHOSU</name>
<gene>
    <name type="primary">LHB</name>
</gene>